<proteinExistence type="evidence at protein level"/>
<gene>
    <name evidence="1" type="primary">nth</name>
    <name type="ordered locus">b1633</name>
    <name type="ordered locus">JW1625</name>
</gene>
<sequence length="211" mass="23562">MNKAKRLEILTRLRENNPHPTTELNFSSPFELLIAVLLSAQATDVSVNKATAKLYPVANTPAAMLELGVEGVKTYIKTIGLYNSKAENIIKTCRILLEQHNGEVPEDRAALEALPGVGRKTANVVLNTAFGWPTIAVDTHIFRVCNRTQFAPGKNVEQVEEKLLKVVPAEFKVDCHHWLILHGRYTCIARKPRCGSCIIEDLCEYKEKVDI</sequence>
<evidence type="ECO:0000255" key="1">
    <source>
        <dbReference type="HAMAP-Rule" id="MF_00942"/>
    </source>
</evidence>
<evidence type="ECO:0000269" key="2">
    <source>
    </source>
</evidence>
<evidence type="ECO:0000269" key="3">
    <source>
    </source>
</evidence>
<evidence type="ECO:0000269" key="4">
    <source>
    </source>
</evidence>
<evidence type="ECO:0000269" key="5">
    <source>
    </source>
</evidence>
<evidence type="ECO:0000269" key="6">
    <source>
    </source>
</evidence>
<evidence type="ECO:0007744" key="7">
    <source>
        <dbReference type="PDB" id="2ABK"/>
    </source>
</evidence>
<evidence type="ECO:0007829" key="8">
    <source>
        <dbReference type="PDB" id="2ABK"/>
    </source>
</evidence>
<name>END3_ECOLI</name>
<accession>P0AB83</accession>
<accession>P20625</accession>
<organism>
    <name type="scientific">Escherichia coli (strain K12)</name>
    <dbReference type="NCBI Taxonomy" id="83333"/>
    <lineage>
        <taxon>Bacteria</taxon>
        <taxon>Pseudomonadati</taxon>
        <taxon>Pseudomonadota</taxon>
        <taxon>Gammaproteobacteria</taxon>
        <taxon>Enterobacterales</taxon>
        <taxon>Enterobacteriaceae</taxon>
        <taxon>Escherichia</taxon>
    </lineage>
</organism>
<comment type="function">
    <text evidence="1 2 3 4">DNA repair enzyme that has both DNA N-glycosylase activity and AP-lyase activity. The DNA N-glycosylase activity releases various damaged pyrimidines from DNA by cleaving the N-glycosidic bond, leaving an AP (apurinic/apyrimidinic) site. The AP-lyase activity cleaves the phosphodiester bond 3' to the AP site by a beta-elimination, leaving a 3'-terminal unsaturated sugar and a product with a terminal 5'-phosphate.</text>
</comment>
<comment type="catalytic activity">
    <reaction evidence="1 2">
        <text>2'-deoxyribonucleotide-(2'-deoxyribose 5'-phosphate)-2'-deoxyribonucleotide-DNA = a 3'-end 2'-deoxyribonucleotide-(2,3-dehydro-2,3-deoxyribose 5'-phosphate)-DNA + a 5'-end 5'-phospho-2'-deoxyribonucleoside-DNA + H(+)</text>
        <dbReference type="Rhea" id="RHEA:66592"/>
        <dbReference type="Rhea" id="RHEA-COMP:13180"/>
        <dbReference type="Rhea" id="RHEA-COMP:16897"/>
        <dbReference type="Rhea" id="RHEA-COMP:17067"/>
        <dbReference type="ChEBI" id="CHEBI:15378"/>
        <dbReference type="ChEBI" id="CHEBI:136412"/>
        <dbReference type="ChEBI" id="CHEBI:157695"/>
        <dbReference type="ChEBI" id="CHEBI:167181"/>
        <dbReference type="EC" id="4.2.99.18"/>
    </reaction>
</comment>
<comment type="cofactor">
    <cofactor evidence="1 5 6">
        <name>[4Fe-4S] cluster</name>
        <dbReference type="ChEBI" id="CHEBI:49883"/>
    </cofactor>
    <text evidence="1 5 6">Binds 1 [4Fe-4S] cluster. The cluster does not appear to play a role in catalysis, but is probably involved in DNA-binding and proper positioning of the enzyme along the DNA strand.</text>
</comment>
<comment type="subunit">
    <text evidence="4">Monomer.</text>
</comment>
<comment type="interaction">
    <interactant intactId="EBI-555213">
        <id>P0AB83</id>
    </interactant>
    <interactant intactId="EBI-542683">
        <id>P0AFG8</id>
        <label>aceE</label>
    </interactant>
    <organismsDiffer>false</organismsDiffer>
    <experiments>3</experiments>
</comment>
<comment type="similarity">
    <text evidence="1">Belongs to the Nth/MutY family.</text>
</comment>
<feature type="chain" id="PRO_0000102210" description="Endonuclease III">
    <location>
        <begin position="1"/>
        <end position="211"/>
    </location>
</feature>
<feature type="domain" description="HhH" evidence="1">
    <location>
        <begin position="108"/>
        <end position="127"/>
    </location>
</feature>
<feature type="binding site" evidence="5 7">
    <location>
        <position position="187"/>
    </location>
    <ligand>
        <name>[4Fe-4S] cluster</name>
        <dbReference type="ChEBI" id="CHEBI:49883"/>
    </ligand>
</feature>
<feature type="binding site" evidence="5 7">
    <location>
        <position position="194"/>
    </location>
    <ligand>
        <name>[4Fe-4S] cluster</name>
        <dbReference type="ChEBI" id="CHEBI:49883"/>
    </ligand>
</feature>
<feature type="binding site" evidence="5 7">
    <location>
        <position position="197"/>
    </location>
    <ligand>
        <name>[4Fe-4S] cluster</name>
        <dbReference type="ChEBI" id="CHEBI:49883"/>
    </ligand>
</feature>
<feature type="binding site" evidence="5 7">
    <location>
        <position position="203"/>
    </location>
    <ligand>
        <name>[4Fe-4S] cluster</name>
        <dbReference type="ChEBI" id="CHEBI:49883"/>
    </ligand>
</feature>
<feature type="mutagenesis site" description="100000-fold decrease in activity and slight decrease in substrate affinity." evidence="5">
    <original>K</original>
    <variation>Q</variation>
    <location>
        <position position="120"/>
    </location>
</feature>
<feature type="mutagenesis site" description="100-fold decrease in activity and 4-fold increase in substrate affinity." evidence="5">
    <original>D</original>
    <variation>N</variation>
    <location>
        <position position="138"/>
    </location>
</feature>
<feature type="mutagenesis site" description="Slight decrease in activity and 130-fold increase in substrate affinity." evidence="5">
    <original>K</original>
    <variation>E</variation>
    <location>
        <position position="191"/>
    </location>
</feature>
<feature type="helix" evidence="8">
    <location>
        <begin position="3"/>
        <end position="16"/>
    </location>
</feature>
<feature type="helix" evidence="8">
    <location>
        <begin position="29"/>
        <end position="38"/>
    </location>
</feature>
<feature type="turn" evidence="8">
    <location>
        <begin position="39"/>
        <end position="41"/>
    </location>
</feature>
<feature type="helix" evidence="8">
    <location>
        <begin position="44"/>
        <end position="54"/>
    </location>
</feature>
<feature type="turn" evidence="8">
    <location>
        <begin position="55"/>
        <end position="57"/>
    </location>
</feature>
<feature type="helix" evidence="8">
    <location>
        <begin position="61"/>
        <end position="76"/>
    </location>
</feature>
<feature type="helix" evidence="8">
    <location>
        <begin position="82"/>
        <end position="98"/>
    </location>
</feature>
<feature type="turn" evidence="8">
    <location>
        <begin position="99"/>
        <end position="102"/>
    </location>
</feature>
<feature type="helix" evidence="8">
    <location>
        <begin position="108"/>
        <end position="113"/>
    </location>
</feature>
<feature type="helix" evidence="8">
    <location>
        <begin position="119"/>
        <end position="130"/>
    </location>
</feature>
<feature type="helix" evidence="8">
    <location>
        <begin position="139"/>
        <end position="148"/>
    </location>
</feature>
<feature type="helix" evidence="8">
    <location>
        <begin position="156"/>
        <end position="166"/>
    </location>
</feature>
<feature type="helix" evidence="8">
    <location>
        <begin position="169"/>
        <end position="171"/>
    </location>
</feature>
<feature type="turn" evidence="8">
    <location>
        <begin position="172"/>
        <end position="174"/>
    </location>
</feature>
<feature type="helix" evidence="8">
    <location>
        <begin position="175"/>
        <end position="185"/>
    </location>
</feature>
<feature type="strand" evidence="8">
    <location>
        <begin position="189"/>
        <end position="191"/>
    </location>
</feature>
<feature type="helix" evidence="8">
    <location>
        <begin position="194"/>
        <end position="196"/>
    </location>
</feature>
<feature type="helix" evidence="8">
    <location>
        <begin position="200"/>
        <end position="202"/>
    </location>
</feature>
<dbReference type="EC" id="4.2.99.18" evidence="1"/>
<dbReference type="EMBL" id="J02857">
    <property type="protein sequence ID" value="AAA24227.1"/>
    <property type="molecule type" value="Genomic_DNA"/>
</dbReference>
<dbReference type="EMBL" id="U00096">
    <property type="protein sequence ID" value="AAC74705.1"/>
    <property type="molecule type" value="Genomic_DNA"/>
</dbReference>
<dbReference type="EMBL" id="AP009048">
    <property type="protein sequence ID" value="BAA15387.1"/>
    <property type="molecule type" value="Genomic_DNA"/>
</dbReference>
<dbReference type="PIR" id="A32412">
    <property type="entry name" value="A32412"/>
</dbReference>
<dbReference type="RefSeq" id="NP_416150.1">
    <property type="nucleotide sequence ID" value="NC_000913.3"/>
</dbReference>
<dbReference type="RefSeq" id="WP_001030339.1">
    <property type="nucleotide sequence ID" value="NZ_STEB01000003.1"/>
</dbReference>
<dbReference type="PDB" id="2ABK">
    <property type="method" value="X-ray"/>
    <property type="resolution" value="1.85 A"/>
    <property type="chains" value="A=1-211"/>
</dbReference>
<dbReference type="PDBsum" id="2ABK"/>
<dbReference type="SMR" id="P0AB83"/>
<dbReference type="BioGRID" id="4262186">
    <property type="interactions" value="127"/>
</dbReference>
<dbReference type="DIP" id="DIP-48071N"/>
<dbReference type="FunCoup" id="P0AB83">
    <property type="interactions" value="536"/>
</dbReference>
<dbReference type="IntAct" id="P0AB83">
    <property type="interactions" value="6"/>
</dbReference>
<dbReference type="STRING" id="511145.b1633"/>
<dbReference type="jPOST" id="P0AB83"/>
<dbReference type="PaxDb" id="511145-b1633"/>
<dbReference type="EnsemblBacteria" id="AAC74705">
    <property type="protein sequence ID" value="AAC74705"/>
    <property type="gene ID" value="b1633"/>
</dbReference>
<dbReference type="GeneID" id="93775785"/>
<dbReference type="GeneID" id="947122"/>
<dbReference type="KEGG" id="ecj:JW1625"/>
<dbReference type="KEGG" id="eco:b1633"/>
<dbReference type="KEGG" id="ecoc:C3026_09380"/>
<dbReference type="PATRIC" id="fig|1411691.4.peg.628"/>
<dbReference type="EchoBASE" id="EB0656"/>
<dbReference type="eggNOG" id="COG0177">
    <property type="taxonomic scope" value="Bacteria"/>
</dbReference>
<dbReference type="HOGENOM" id="CLU_012862_3_0_6"/>
<dbReference type="InParanoid" id="P0AB83"/>
<dbReference type="OMA" id="QIIWYGR"/>
<dbReference type="OrthoDB" id="9800977at2"/>
<dbReference type="PhylomeDB" id="P0AB83"/>
<dbReference type="BioCyc" id="EcoCyc:EG10662-MONOMER"/>
<dbReference type="BioCyc" id="MetaCyc:EG10662-MONOMER"/>
<dbReference type="BRENDA" id="4.2.99.18">
    <property type="organism ID" value="2026"/>
</dbReference>
<dbReference type="EvolutionaryTrace" id="P0AB83"/>
<dbReference type="PRO" id="PR:P0AB83"/>
<dbReference type="Proteomes" id="UP000000625">
    <property type="component" value="Chromosome"/>
</dbReference>
<dbReference type="GO" id="GO:0051539">
    <property type="term" value="F:4 iron, 4 sulfur cluster binding"/>
    <property type="evidence" value="ECO:0000314"/>
    <property type="project" value="EcoCyc"/>
</dbReference>
<dbReference type="GO" id="GO:0140078">
    <property type="term" value="F:class I DNA-(apurinic or apyrimidinic site) endonuclease activity"/>
    <property type="evidence" value="ECO:0007669"/>
    <property type="project" value="UniProtKB-EC"/>
</dbReference>
<dbReference type="GO" id="GO:0003677">
    <property type="term" value="F:DNA binding"/>
    <property type="evidence" value="ECO:0007669"/>
    <property type="project" value="UniProtKB-UniRule"/>
</dbReference>
<dbReference type="GO" id="GO:0019104">
    <property type="term" value="F:DNA N-glycosylase activity"/>
    <property type="evidence" value="ECO:0000318"/>
    <property type="project" value="GO_Central"/>
</dbReference>
<dbReference type="GO" id="GO:0003906">
    <property type="term" value="F:DNA-(apurinic or apyrimidinic site) endonuclease activity"/>
    <property type="evidence" value="ECO:0000314"/>
    <property type="project" value="EcoCyc"/>
</dbReference>
<dbReference type="GO" id="GO:0046872">
    <property type="term" value="F:metal ion binding"/>
    <property type="evidence" value="ECO:0007669"/>
    <property type="project" value="UniProtKB-KW"/>
</dbReference>
<dbReference type="GO" id="GO:0000703">
    <property type="term" value="F:oxidized pyrimidine nucleobase lesion DNA N-glycosylase activity"/>
    <property type="evidence" value="ECO:0000314"/>
    <property type="project" value="EcoCyc"/>
</dbReference>
<dbReference type="GO" id="GO:0004844">
    <property type="term" value="F:uracil DNA N-glycosylase activity"/>
    <property type="evidence" value="ECO:0000314"/>
    <property type="project" value="EcoCyc"/>
</dbReference>
<dbReference type="GO" id="GO:0006285">
    <property type="term" value="P:base-excision repair, AP site formation"/>
    <property type="evidence" value="ECO:0000314"/>
    <property type="project" value="EcoCyc"/>
</dbReference>
<dbReference type="GO" id="GO:0097510">
    <property type="term" value="P:base-excision repair, AP site formation via deaminated base removal"/>
    <property type="evidence" value="ECO:0000314"/>
    <property type="project" value="EcoCyc"/>
</dbReference>
<dbReference type="GO" id="GO:0034644">
    <property type="term" value="P:cellular response to UV"/>
    <property type="evidence" value="ECO:0000314"/>
    <property type="project" value="EcoCyc"/>
</dbReference>
<dbReference type="CDD" id="cd00056">
    <property type="entry name" value="ENDO3c"/>
    <property type="match status" value="1"/>
</dbReference>
<dbReference type="FunFam" id="1.10.1670.10:FF:000001">
    <property type="entry name" value="Endonuclease III"/>
    <property type="match status" value="1"/>
</dbReference>
<dbReference type="FunFam" id="1.10.340.30:FF:000001">
    <property type="entry name" value="Endonuclease III"/>
    <property type="match status" value="1"/>
</dbReference>
<dbReference type="Gene3D" id="1.10.1670.10">
    <property type="entry name" value="Helix-hairpin-Helix base-excision DNA repair enzymes (C-terminal)"/>
    <property type="match status" value="1"/>
</dbReference>
<dbReference type="Gene3D" id="1.10.340.30">
    <property type="entry name" value="Hypothetical protein, domain 2"/>
    <property type="match status" value="1"/>
</dbReference>
<dbReference type="HAMAP" id="MF_00942">
    <property type="entry name" value="Nth"/>
    <property type="match status" value="1"/>
</dbReference>
<dbReference type="InterPro" id="IPR011257">
    <property type="entry name" value="DNA_glycosylase"/>
</dbReference>
<dbReference type="InterPro" id="IPR004036">
    <property type="entry name" value="Endonuclease-III-like_CS2"/>
</dbReference>
<dbReference type="InterPro" id="IPR003651">
    <property type="entry name" value="Endonuclease3_FeS-loop_motif"/>
</dbReference>
<dbReference type="InterPro" id="IPR004035">
    <property type="entry name" value="Endouclease-III_FeS-bd_BS"/>
</dbReference>
<dbReference type="InterPro" id="IPR003265">
    <property type="entry name" value="HhH-GPD_domain"/>
</dbReference>
<dbReference type="InterPro" id="IPR023170">
    <property type="entry name" value="HhH_base_excis_C"/>
</dbReference>
<dbReference type="InterPro" id="IPR000445">
    <property type="entry name" value="HhH_motif"/>
</dbReference>
<dbReference type="InterPro" id="IPR005759">
    <property type="entry name" value="Nth"/>
</dbReference>
<dbReference type="NCBIfam" id="TIGR01083">
    <property type="entry name" value="nth"/>
    <property type="match status" value="1"/>
</dbReference>
<dbReference type="NCBIfam" id="NF007978">
    <property type="entry name" value="PRK10702.1"/>
    <property type="match status" value="1"/>
</dbReference>
<dbReference type="PANTHER" id="PTHR10359">
    <property type="entry name" value="A/G-SPECIFIC ADENINE GLYCOSYLASE/ENDONUCLEASE III"/>
    <property type="match status" value="1"/>
</dbReference>
<dbReference type="PANTHER" id="PTHR10359:SF18">
    <property type="entry name" value="ENDONUCLEASE III"/>
    <property type="match status" value="1"/>
</dbReference>
<dbReference type="Pfam" id="PF10576">
    <property type="entry name" value="EndIII_4Fe-2S"/>
    <property type="match status" value="1"/>
</dbReference>
<dbReference type="Pfam" id="PF00633">
    <property type="entry name" value="HHH"/>
    <property type="match status" value="1"/>
</dbReference>
<dbReference type="Pfam" id="PF00730">
    <property type="entry name" value="HhH-GPD"/>
    <property type="match status" value="1"/>
</dbReference>
<dbReference type="PIRSF" id="PIRSF001435">
    <property type="entry name" value="Nth"/>
    <property type="match status" value="1"/>
</dbReference>
<dbReference type="SMART" id="SM00478">
    <property type="entry name" value="ENDO3c"/>
    <property type="match status" value="1"/>
</dbReference>
<dbReference type="SMART" id="SM00525">
    <property type="entry name" value="FES"/>
    <property type="match status" value="1"/>
</dbReference>
<dbReference type="SUPFAM" id="SSF48150">
    <property type="entry name" value="DNA-glycosylase"/>
    <property type="match status" value="1"/>
</dbReference>
<dbReference type="PROSITE" id="PS00764">
    <property type="entry name" value="ENDONUCLEASE_III_1"/>
    <property type="match status" value="1"/>
</dbReference>
<dbReference type="PROSITE" id="PS01155">
    <property type="entry name" value="ENDONUCLEASE_III_2"/>
    <property type="match status" value="1"/>
</dbReference>
<keyword id="KW-0002">3D-structure</keyword>
<keyword id="KW-0004">4Fe-4S</keyword>
<keyword id="KW-0903">Direct protein sequencing</keyword>
<keyword id="KW-0227">DNA damage</keyword>
<keyword id="KW-0234">DNA repair</keyword>
<keyword id="KW-0238">DNA-binding</keyword>
<keyword id="KW-0326">Glycosidase</keyword>
<keyword id="KW-0378">Hydrolase</keyword>
<keyword id="KW-0408">Iron</keyword>
<keyword id="KW-0411">Iron-sulfur</keyword>
<keyword id="KW-0456">Lyase</keyword>
<keyword id="KW-0479">Metal-binding</keyword>
<keyword id="KW-1185">Reference proteome</keyword>
<protein>
    <recommendedName>
        <fullName evidence="1">Endonuclease III</fullName>
        <ecNumber evidence="1">4.2.99.18</ecNumber>
    </recommendedName>
    <alternativeName>
        <fullName evidence="1">DNA-(apurinic or apyrimidinic site) lyase</fullName>
    </alternativeName>
</protein>
<reference key="1">
    <citation type="journal article" date="1989" name="Biochemistry">
        <title>Purification and characterization of Escherichia coli endonuclease III from the cloned nth gene.</title>
        <authorList>
            <person name="Asahara H."/>
            <person name="Wistort P.M."/>
            <person name="Bank J.F."/>
            <person name="Bakerian R.H."/>
            <person name="Cunningham R.P."/>
        </authorList>
    </citation>
    <scope>NUCLEOTIDE SEQUENCE [GENOMIC DNA]</scope>
    <scope>PROTEIN SEQUENCE OF 1-10</scope>
    <scope>FUNCTION</scope>
</reference>
<reference key="2">
    <citation type="journal article" date="1996" name="DNA Res.">
        <title>A 570-kb DNA sequence of the Escherichia coli K-12 genome corresponding to the 28.0-40.1 min region on the linkage map.</title>
        <authorList>
            <person name="Aiba H."/>
            <person name="Baba T."/>
            <person name="Fujita K."/>
            <person name="Hayashi K."/>
            <person name="Inada T."/>
            <person name="Isono K."/>
            <person name="Itoh T."/>
            <person name="Kasai H."/>
            <person name="Kashimoto K."/>
            <person name="Kimura S."/>
            <person name="Kitakawa M."/>
            <person name="Kitagawa M."/>
            <person name="Makino K."/>
            <person name="Miki T."/>
            <person name="Mizobuchi K."/>
            <person name="Mori H."/>
            <person name="Mori T."/>
            <person name="Motomura K."/>
            <person name="Nakade S."/>
            <person name="Nakamura Y."/>
            <person name="Nashimoto H."/>
            <person name="Nishio Y."/>
            <person name="Oshima T."/>
            <person name="Saito N."/>
            <person name="Sampei G."/>
            <person name="Seki Y."/>
            <person name="Sivasundaram S."/>
            <person name="Tagami H."/>
            <person name="Takeda J."/>
            <person name="Takemoto K."/>
            <person name="Takeuchi Y."/>
            <person name="Wada C."/>
            <person name="Yamamoto Y."/>
            <person name="Horiuchi T."/>
        </authorList>
    </citation>
    <scope>NUCLEOTIDE SEQUENCE [LARGE SCALE GENOMIC DNA]</scope>
    <source>
        <strain>K12 / W3110 / ATCC 27325 / DSM 5911</strain>
    </source>
</reference>
<reference key="3">
    <citation type="journal article" date="1997" name="Science">
        <title>The complete genome sequence of Escherichia coli K-12.</title>
        <authorList>
            <person name="Blattner F.R."/>
            <person name="Plunkett G. III"/>
            <person name="Bloch C.A."/>
            <person name="Perna N.T."/>
            <person name="Burland V."/>
            <person name="Riley M."/>
            <person name="Collado-Vides J."/>
            <person name="Glasner J.D."/>
            <person name="Rode C.K."/>
            <person name="Mayhew G.F."/>
            <person name="Gregor J."/>
            <person name="Davis N.W."/>
            <person name="Kirkpatrick H.A."/>
            <person name="Goeden M.A."/>
            <person name="Rose D.J."/>
            <person name="Mau B."/>
            <person name="Shao Y."/>
        </authorList>
    </citation>
    <scope>NUCLEOTIDE SEQUENCE [LARGE SCALE GENOMIC DNA]</scope>
    <source>
        <strain>K12 / MG1655 / ATCC 47076</strain>
    </source>
</reference>
<reference key="4">
    <citation type="journal article" date="2006" name="Mol. Syst. Biol.">
        <title>Highly accurate genome sequences of Escherichia coli K-12 strains MG1655 and W3110.</title>
        <authorList>
            <person name="Hayashi K."/>
            <person name="Morooka N."/>
            <person name="Yamamoto Y."/>
            <person name="Fujita K."/>
            <person name="Isono K."/>
            <person name="Choi S."/>
            <person name="Ohtsubo E."/>
            <person name="Baba T."/>
            <person name="Wanner B.L."/>
            <person name="Mori H."/>
            <person name="Horiuchi T."/>
        </authorList>
    </citation>
    <scope>NUCLEOTIDE SEQUENCE [LARGE SCALE GENOMIC DNA]</scope>
    <source>
        <strain>K12 / W3110 / ATCC 27325 / DSM 5911</strain>
    </source>
</reference>
<reference key="5">
    <citation type="journal article" date="1984" name="J. Biol. Chem.">
        <title>DNA glycosylase activities for thymine residues damaged by ring saturation, fragmentation, or ring contraction are functions of endonuclease III in Escherichia coli.</title>
        <authorList>
            <person name="Breimer L.H."/>
            <person name="Lindahl T."/>
        </authorList>
    </citation>
    <scope>FUNCTION</scope>
    <scope>SUBUNIT</scope>
</reference>
<reference key="6">
    <citation type="journal article" date="1988" name="Nucleic Acids Res.">
        <title>The mechanisms of action of E. coli endonuclease III and T4 UV endonuclease (endonuclease V) at AP sites.</title>
        <authorList>
            <person name="Kim J."/>
            <person name="Linn S."/>
        </authorList>
    </citation>
    <scope>FUNCTION</scope>
    <scope>CATALYTIC ACTIVITY</scope>
</reference>
<reference key="7">
    <citation type="journal article" date="1994" name="Ann. N. Y. Acad. Sci.">
        <title>Structure and function of Escherichia coli endonuclease III.</title>
        <authorList>
            <person name="Cunningham R.P."/>
            <person name="Ahern H."/>
            <person name="Xing D."/>
            <person name="Thayer M.M."/>
            <person name="Tainer J.A."/>
        </authorList>
    </citation>
    <scope>COFACTOR</scope>
</reference>
<reference key="8">
    <citation type="journal article" date="1992" name="Science">
        <title>Atomic structure of the DNA repair [4Fe-4S] enzyme endonuclease III.</title>
        <authorList>
            <person name="Kuo C.-F."/>
            <person name="McRee D."/>
            <person name="Fisher C.L."/>
            <person name="O'Handley S.F."/>
            <person name="Cunningham R.P."/>
            <person name="Tainer J.A."/>
        </authorList>
    </citation>
    <scope>X-RAY CRYSTALLOGRAPHY (2.0 ANGSTROMS)</scope>
</reference>
<reference key="9">
    <citation type="journal article" date="1995" name="EMBO J.">
        <title>Novel DNA binding motifs in the DNA repair enzyme endonuclease III crystal structure.</title>
        <authorList>
            <person name="Thayer M.M."/>
            <person name="Ahern H."/>
            <person name="Xing D."/>
            <person name="Cunningham R.P."/>
            <person name="Tainer J.A."/>
        </authorList>
    </citation>
    <scope>X-RAY CRYSTALLOGRAPHY (1.85 ANGSTROMS) IN COMPLEX WITH IRON-SULFUR (4FE-4S)</scope>
    <scope>COFACTOR</scope>
    <scope>DNA-BINDING</scope>
    <scope>MUTAGENESIS OF LYS-120; ASP-138 AND LYS-191</scope>
</reference>